<feature type="chain" id="PRO_0000191386" description="Alpha-1,3-mannosyl-glycoprotein 2-beta-N-acetylglucosaminyltransferase">
    <location>
        <begin position="1"/>
        <end position="447"/>
    </location>
</feature>
<feature type="topological domain" description="Cytoplasmic" evidence="4">
    <location>
        <begin position="1"/>
        <end position="6"/>
    </location>
</feature>
<feature type="transmembrane region" description="Helical; Signal-anchor for type II membrane protein" evidence="4">
    <location>
        <begin position="7"/>
        <end position="29"/>
    </location>
</feature>
<feature type="topological domain" description="Lumenal" evidence="4">
    <location>
        <begin position="30"/>
        <end position="447"/>
    </location>
</feature>
<feature type="active site" description="Proton acceptor" evidence="4">
    <location>
        <position position="291"/>
    </location>
</feature>
<feature type="binding site" evidence="1">
    <location>
        <position position="117"/>
    </location>
    <ligand>
        <name>substrate</name>
    </ligand>
</feature>
<feature type="binding site" evidence="1">
    <location>
        <position position="144"/>
    </location>
    <ligand>
        <name>substrate</name>
    </ligand>
</feature>
<feature type="binding site" evidence="1">
    <location>
        <position position="190"/>
    </location>
    <ligand>
        <name>substrate</name>
    </ligand>
</feature>
<feature type="binding site" evidence="1">
    <location>
        <position position="212"/>
    </location>
    <ligand>
        <name>substrate</name>
    </ligand>
</feature>
<feature type="binding site" evidence="1">
    <location>
        <position position="213"/>
    </location>
    <ligand>
        <name>Mn(2+)</name>
        <dbReference type="ChEBI" id="CHEBI:29035"/>
    </ligand>
</feature>
<feature type="binding site" evidence="1">
    <location>
        <position position="322"/>
    </location>
    <ligand>
        <name>substrate</name>
    </ligand>
</feature>
<feature type="disulfide bond" evidence="1">
    <location>
        <begin position="115"/>
        <end position="145"/>
    </location>
</feature>
<feature type="disulfide bond" evidence="1">
    <location>
        <begin position="239"/>
        <end position="305"/>
    </location>
</feature>
<dbReference type="EC" id="2.4.1.101"/>
<dbReference type="EMBL" id="D16302">
    <property type="protein sequence ID" value="BAA03807.1"/>
    <property type="molecule type" value="mRNA"/>
</dbReference>
<dbReference type="EMBL" id="BC074010">
    <property type="protein sequence ID" value="AAH74010.1"/>
    <property type="molecule type" value="mRNA"/>
</dbReference>
<dbReference type="PIR" id="JC2076">
    <property type="entry name" value="JC2076"/>
</dbReference>
<dbReference type="RefSeq" id="NP_110488.1">
    <property type="nucleotide sequence ID" value="NM_030861.1"/>
</dbReference>
<dbReference type="RefSeq" id="XP_006246244.1">
    <property type="nucleotide sequence ID" value="XM_006246182.4"/>
</dbReference>
<dbReference type="RefSeq" id="XP_006246245.1">
    <property type="nucleotide sequence ID" value="XM_006246183.5"/>
</dbReference>
<dbReference type="RefSeq" id="XP_006246246.1">
    <property type="nucleotide sequence ID" value="XM_006246184.5"/>
</dbReference>
<dbReference type="RefSeq" id="XP_006246247.1">
    <property type="nucleotide sequence ID" value="XM_006246185.4"/>
</dbReference>
<dbReference type="RefSeq" id="XP_008765937.1">
    <property type="nucleotide sequence ID" value="XM_008767715.2"/>
</dbReference>
<dbReference type="RefSeq" id="XP_063126006.1">
    <property type="nucleotide sequence ID" value="XM_063269936.1"/>
</dbReference>
<dbReference type="RefSeq" id="XP_063126007.1">
    <property type="nucleotide sequence ID" value="XM_063269937.1"/>
</dbReference>
<dbReference type="RefSeq" id="XP_063126008.1">
    <property type="nucleotide sequence ID" value="XM_063269938.1"/>
</dbReference>
<dbReference type="RefSeq" id="XP_063126009.1">
    <property type="nucleotide sequence ID" value="XM_063269939.1"/>
</dbReference>
<dbReference type="RefSeq" id="XP_063126010.1">
    <property type="nucleotide sequence ID" value="XM_063269940.1"/>
</dbReference>
<dbReference type="SMR" id="Q09325"/>
<dbReference type="FunCoup" id="Q09325">
    <property type="interactions" value="2491"/>
</dbReference>
<dbReference type="IntAct" id="Q09325">
    <property type="interactions" value="1"/>
</dbReference>
<dbReference type="STRING" id="10116.ENSRNOP00000068827"/>
<dbReference type="CAZy" id="GT13">
    <property type="family name" value="Glycosyltransferase Family 13"/>
</dbReference>
<dbReference type="iPTMnet" id="Q09325"/>
<dbReference type="PhosphoSitePlus" id="Q09325"/>
<dbReference type="jPOST" id="Q09325"/>
<dbReference type="PaxDb" id="10116-ENSRNOP00000044560"/>
<dbReference type="Ensembl" id="ENSRNOT00000052360.2">
    <property type="protein sequence ID" value="ENSRNOP00000044560.1"/>
    <property type="gene ID" value="ENSRNOG00000068826.1"/>
</dbReference>
<dbReference type="Ensembl" id="ENSRNOT00000093956.1">
    <property type="protein sequence ID" value="ENSRNOP00000081587.1"/>
    <property type="gene ID" value="ENSRNOG00000068826.1"/>
</dbReference>
<dbReference type="Ensembl" id="ENSRNOT00000100116.1">
    <property type="protein sequence ID" value="ENSRNOP00000083147.1"/>
    <property type="gene ID" value="ENSRNOG00000068826.1"/>
</dbReference>
<dbReference type="Ensembl" id="ENSRNOT00000101283.1">
    <property type="protein sequence ID" value="ENSRNOP00000081858.1"/>
    <property type="gene ID" value="ENSRNOG00000068826.1"/>
</dbReference>
<dbReference type="Ensembl" id="ENSRNOT00000106126.1">
    <property type="protein sequence ID" value="ENSRNOP00000090215.1"/>
    <property type="gene ID" value="ENSRNOG00000068826.1"/>
</dbReference>
<dbReference type="Ensembl" id="ENSRNOT00000113892.1">
    <property type="protein sequence ID" value="ENSRNOP00000079270.1"/>
    <property type="gene ID" value="ENSRNOG00000068826.1"/>
</dbReference>
<dbReference type="Ensembl" id="ENSRNOT00000116725.1">
    <property type="protein sequence ID" value="ENSRNOP00000082878.1"/>
    <property type="gene ID" value="ENSRNOG00000068826.1"/>
</dbReference>
<dbReference type="GeneID" id="81519"/>
<dbReference type="KEGG" id="rno:81519"/>
<dbReference type="UCSC" id="RGD:620097">
    <property type="organism name" value="rat"/>
</dbReference>
<dbReference type="AGR" id="RGD:620097"/>
<dbReference type="CTD" id="4245"/>
<dbReference type="RGD" id="620097">
    <property type="gene designation" value="Mgat1"/>
</dbReference>
<dbReference type="eggNOG" id="KOG1413">
    <property type="taxonomic scope" value="Eukaryota"/>
</dbReference>
<dbReference type="GeneTree" id="ENSGT00530000063632"/>
<dbReference type="HOGENOM" id="CLU_022150_0_0_1"/>
<dbReference type="InParanoid" id="Q09325"/>
<dbReference type="OMA" id="KGYDLSW"/>
<dbReference type="OrthoDB" id="440755at2759"/>
<dbReference type="PhylomeDB" id="Q09325"/>
<dbReference type="TreeFam" id="TF320555"/>
<dbReference type="Reactome" id="R-RNO-964739">
    <property type="pathway name" value="N-glycan trimming and elongation in the cis-Golgi"/>
</dbReference>
<dbReference type="UniPathway" id="UPA00378"/>
<dbReference type="PRO" id="PR:Q09325"/>
<dbReference type="Proteomes" id="UP000002494">
    <property type="component" value="Chromosome 10"/>
</dbReference>
<dbReference type="Bgee" id="ENSRNOG00000031208">
    <property type="expression patterns" value="Expressed in thymus and 19 other cell types or tissues"/>
</dbReference>
<dbReference type="GO" id="GO:0005794">
    <property type="term" value="C:Golgi apparatus"/>
    <property type="evidence" value="ECO:0000318"/>
    <property type="project" value="GO_Central"/>
</dbReference>
<dbReference type="GO" id="GO:0000139">
    <property type="term" value="C:Golgi membrane"/>
    <property type="evidence" value="ECO:0000266"/>
    <property type="project" value="RGD"/>
</dbReference>
<dbReference type="GO" id="GO:0048471">
    <property type="term" value="C:perinuclear region of cytoplasm"/>
    <property type="evidence" value="ECO:0007669"/>
    <property type="project" value="UniProtKB-SubCell"/>
</dbReference>
<dbReference type="GO" id="GO:0008375">
    <property type="term" value="F:acetylglucosaminyltransferase activity"/>
    <property type="evidence" value="ECO:0000266"/>
    <property type="project" value="RGD"/>
</dbReference>
<dbReference type="GO" id="GO:0003827">
    <property type="term" value="F:alpha-1,3-mannosylglycoprotein 2-beta-N-acetylglucosaminyltransferase activity"/>
    <property type="evidence" value="ECO:0000266"/>
    <property type="project" value="RGD"/>
</dbReference>
<dbReference type="GO" id="GO:0030145">
    <property type="term" value="F:manganese ion binding"/>
    <property type="evidence" value="ECO:0000266"/>
    <property type="project" value="RGD"/>
</dbReference>
<dbReference type="GO" id="GO:0001701">
    <property type="term" value="P:in utero embryonic development"/>
    <property type="evidence" value="ECO:0000266"/>
    <property type="project" value="RGD"/>
</dbReference>
<dbReference type="GO" id="GO:0006487">
    <property type="term" value="P:protein N-linked glycosylation"/>
    <property type="evidence" value="ECO:0000318"/>
    <property type="project" value="GO_Central"/>
</dbReference>
<dbReference type="GO" id="GO:0018279">
    <property type="term" value="P:protein N-linked glycosylation via asparagine"/>
    <property type="evidence" value="ECO:0000266"/>
    <property type="project" value="RGD"/>
</dbReference>
<dbReference type="GO" id="GO:0006049">
    <property type="term" value="P:UDP-N-acetylglucosamine catabolic process"/>
    <property type="evidence" value="ECO:0000266"/>
    <property type="project" value="RGD"/>
</dbReference>
<dbReference type="CDD" id="cd02514">
    <property type="entry name" value="GT13_GLCNAC-TI"/>
    <property type="match status" value="1"/>
</dbReference>
<dbReference type="FunFam" id="3.90.550.10:FF:000055">
    <property type="entry name" value="Alpha-1,3-mannosyl-glycoprotein 2-beta-N-acetylglucosaminyltransferase"/>
    <property type="match status" value="1"/>
</dbReference>
<dbReference type="FunFam" id="3.10.180.20:FF:000001">
    <property type="entry name" value="alpha-1,3-mannosyl-glycoprotein 2-beta-N-acetylglucosaminyltransferase"/>
    <property type="match status" value="1"/>
</dbReference>
<dbReference type="Gene3D" id="3.10.180.20">
    <property type="entry name" value="N-Acetylglucosaminyltransferase I, Domain 2"/>
    <property type="match status" value="1"/>
</dbReference>
<dbReference type="Gene3D" id="3.90.550.10">
    <property type="entry name" value="Spore Coat Polysaccharide Biosynthesis Protein SpsA, Chain A"/>
    <property type="match status" value="1"/>
</dbReference>
<dbReference type="InterPro" id="IPR004139">
    <property type="entry name" value="Glyco_trans_13"/>
</dbReference>
<dbReference type="InterPro" id="IPR052261">
    <property type="entry name" value="Glycosyltransferase_13"/>
</dbReference>
<dbReference type="InterPro" id="IPR029044">
    <property type="entry name" value="Nucleotide-diphossugar_trans"/>
</dbReference>
<dbReference type="PANTHER" id="PTHR10468:SF0">
    <property type="entry name" value="ALPHA-1,3-MANNOSYL-GLYCOPROTEIN 2-BETA-N-ACETYLGLUCOSAMINYLTRANSFERASE"/>
    <property type="match status" value="1"/>
</dbReference>
<dbReference type="PANTHER" id="PTHR10468">
    <property type="entry name" value="PROTEIN O-LINKED-MANNOSE BETA-1,2-N-ACETYLGLUCOSAMINYLTRANSFERASE 1/ALPHA-1,3-MANNOSYL-GLYCOPROTEIN 2-BETA-N-ACETYLGLUCOSAMINYLTRANSFERASE"/>
    <property type="match status" value="1"/>
</dbReference>
<dbReference type="Pfam" id="PF03071">
    <property type="entry name" value="GNT-I"/>
    <property type="match status" value="1"/>
</dbReference>
<dbReference type="SUPFAM" id="SSF53448">
    <property type="entry name" value="Nucleotide-diphospho-sugar transferases"/>
    <property type="match status" value="1"/>
</dbReference>
<gene>
    <name type="primary">Mgat1</name>
    <name type="synonym">Gnt1</name>
</gene>
<protein>
    <recommendedName>
        <fullName>Alpha-1,3-mannosyl-glycoprotein 2-beta-N-acetylglucosaminyltransferase</fullName>
        <ecNumber>2.4.1.101</ecNumber>
    </recommendedName>
    <alternativeName>
        <fullName>N-glycosyl-oligosaccharide-glycoprotein N-acetylglucosaminyltransferase I</fullName>
        <shortName>GNT-I</shortName>
        <shortName>GlcNAc-T I</shortName>
    </alternativeName>
</protein>
<accession>Q09325</accession>
<evidence type="ECO:0000250" key="1"/>
<evidence type="ECO:0000250" key="2">
    <source>
        <dbReference type="UniProtKB" id="P26572"/>
    </source>
</evidence>
<evidence type="ECO:0000250" key="3">
    <source>
        <dbReference type="UniProtKB" id="P27808"/>
    </source>
</evidence>
<evidence type="ECO:0000255" key="4"/>
<evidence type="ECO:0000305" key="5"/>
<keyword id="KW-0963">Cytoplasm</keyword>
<keyword id="KW-1015">Disulfide bond</keyword>
<keyword id="KW-0328">Glycosyltransferase</keyword>
<keyword id="KW-0333">Golgi apparatus</keyword>
<keyword id="KW-0464">Manganese</keyword>
<keyword id="KW-0472">Membrane</keyword>
<keyword id="KW-0479">Metal-binding</keyword>
<keyword id="KW-1185">Reference proteome</keyword>
<keyword id="KW-0735">Signal-anchor</keyword>
<keyword id="KW-0808">Transferase</keyword>
<keyword id="KW-0812">Transmembrane</keyword>
<keyword id="KW-1133">Transmembrane helix</keyword>
<name>MGAT1_RAT</name>
<reference key="1">
    <citation type="journal article" date="1994" name="Biosci. Biotechnol. Biochem.">
        <title>Cloning of a cDNA encoding N-acetylglucosaminyltransferase I from rat liver and analysis of its expression in rat tissues.</title>
        <authorList>
            <person name="Fukada T."/>
            <person name="Iida K."/>
            <person name="Kioka N."/>
            <person name="Sakai H."/>
            <person name="Komano T."/>
        </authorList>
    </citation>
    <scope>NUCLEOTIDE SEQUENCE [MRNA]</scope>
    <source>
        <strain>Wistar</strain>
        <tissue>Liver</tissue>
    </source>
</reference>
<reference key="2">
    <citation type="journal article" date="2004" name="Genome Res.">
        <title>The status, quality, and expansion of the NIH full-length cDNA project: the Mammalian Gene Collection (MGC).</title>
        <authorList>
            <consortium name="The MGC Project Team"/>
        </authorList>
    </citation>
    <scope>NUCLEOTIDE SEQUENCE [LARGE SCALE MRNA]</scope>
    <source>
        <tissue>Lung</tissue>
    </source>
</reference>
<sequence length="447" mass="51586">MLKKQSAGLVLWGAIIFVGWNALLLLFFWTRPAPGRLPSDSALGDDPASLTREVIHLAEDAEAELERQRGLLQQIKEHYSLWRQRWRVPTVAPPAWPRVPGTPSPAVIPILVIACDRSTVRRCLDKLLHYRPSAEHFPIIVSQDCGHEETAQVIASYGTAVTHIRQPDLSNIAVQPDHRKFQGYYKIARHYRWALGQIFNKFKFPAAVVVEDDLEVAPDFFEYFQATYPLLKADPSLWCVSAWNDNGKEQMVDSSKPELLYRTDFFPGLGWLLLADLWAELEPKWPKAFWDDWMRRPEQRKGRACIRPEISRTMTFGRKGVSHGQFFDQHLKFIKLNQQFVPFTQLDLSYLQREAYDRDFLAQVYGAPQLQVEKVRTNDRKELGEVRVQYTSRDSFKAFAKALGVMDDLKSGVPRAGYRGIVTFQFRGRRVHLAPPETWNGYDPSWN</sequence>
<comment type="function">
    <text>Initiates complex N-linked carbohydrate formation. Essential for the conversion of high-mannose to hybrid and complex N-glycans.</text>
</comment>
<comment type="catalytic activity">
    <reaction>
        <text>N(4)-(alpha-D-Man-(1-&gt;3)-[alpha-D-Man-(1-&gt;3)-[alpha-D-Man-(1-&gt;6)]-alpha-D-Man-(1-&gt;6)]-beta-D-Man-(1-&gt;4)-beta-D-GlcNAc-(1-&gt;4)-beta-D-GlcNAc)-L-asparaginyl-[protein] (N-glucan mannose isomer 5A1,2) + UDP-N-acetyl-alpha-D-glucosamine = N(4)-{beta-D-GlcNAc-(1-&gt;2)-alpha-D-Man-(1-&gt;3)-[alpha-D-Man-(1-&gt;3)-[alpha-D-Man-(1-&gt;6)]-alpha-D-Man-(1-&gt;6)]-beta-D-Man-(1-&gt;4)-beta-D-GlcNAc-(1-&gt;4)-beta-D-GlcNAc}-L-asparaginyl-[protein] + UDP + H(+)</text>
        <dbReference type="Rhea" id="RHEA:11456"/>
        <dbReference type="Rhea" id="RHEA-COMP:14367"/>
        <dbReference type="Rhea" id="RHEA-COMP:14368"/>
        <dbReference type="ChEBI" id="CHEBI:15378"/>
        <dbReference type="ChEBI" id="CHEBI:57705"/>
        <dbReference type="ChEBI" id="CHEBI:58223"/>
        <dbReference type="ChEBI" id="CHEBI:59087"/>
        <dbReference type="ChEBI" id="CHEBI:60625"/>
        <dbReference type="EC" id="2.4.1.101"/>
    </reaction>
</comment>
<comment type="cofactor">
    <cofactor evidence="1">
        <name>Mn(2+)</name>
        <dbReference type="ChEBI" id="CHEBI:29035"/>
    </cofactor>
    <text evidence="1">The cofactor is mostly bound to the substrate.</text>
</comment>
<comment type="pathway">
    <text>Protein modification; protein glycosylation.</text>
</comment>
<comment type="subunit">
    <text evidence="2 3">Interacts with MGAT4D. Interacts with BRI3 (By similarity).</text>
</comment>
<comment type="subcellular location">
    <subcellularLocation>
        <location>Golgi apparatus membrane</location>
        <topology>Single-pass type II membrane protein</topology>
    </subcellularLocation>
    <subcellularLocation>
        <location evidence="2">Cytoplasm</location>
        <location evidence="2">Perinuclear region</location>
    </subcellularLocation>
    <text evidence="2">Co-localizes with BRI3 at the perinuclear region.</text>
</comment>
<comment type="tissue specificity">
    <text>Appears to be present in all tissues.</text>
</comment>
<comment type="similarity">
    <text evidence="5">Belongs to the glycosyltransferase 13 family.</text>
</comment>
<proteinExistence type="evidence at transcript level"/>
<organism>
    <name type="scientific">Rattus norvegicus</name>
    <name type="common">Rat</name>
    <dbReference type="NCBI Taxonomy" id="10116"/>
    <lineage>
        <taxon>Eukaryota</taxon>
        <taxon>Metazoa</taxon>
        <taxon>Chordata</taxon>
        <taxon>Craniata</taxon>
        <taxon>Vertebrata</taxon>
        <taxon>Euteleostomi</taxon>
        <taxon>Mammalia</taxon>
        <taxon>Eutheria</taxon>
        <taxon>Euarchontoglires</taxon>
        <taxon>Glires</taxon>
        <taxon>Rodentia</taxon>
        <taxon>Myomorpha</taxon>
        <taxon>Muroidea</taxon>
        <taxon>Muridae</taxon>
        <taxon>Murinae</taxon>
        <taxon>Rattus</taxon>
    </lineage>
</organism>